<sequence length="43" mass="4662">METATLVAISISGLLVSFTGYALYTAFGQPSQQLRDPFEEHGD</sequence>
<feature type="chain" id="PRO_0000207951" description="Protein PsbN">
    <location>
        <begin position="1"/>
        <end position="43"/>
    </location>
</feature>
<feature type="transmembrane region" description="Helical" evidence="1">
    <location>
        <begin position="5"/>
        <end position="27"/>
    </location>
</feature>
<reference key="1">
    <citation type="journal article" date="2000" name="Am. J. Bot.">
        <title>Utility of 17 chloroplast genes for inferring the phylogeny of the basal angiosperms.</title>
        <authorList>
            <person name="Graham S.W."/>
            <person name="Olmstead R.G."/>
        </authorList>
    </citation>
    <scope>NUCLEOTIDE SEQUENCE [GENOMIC DNA]</scope>
</reference>
<organism>
    <name type="scientific">Saururus cernuus</name>
    <name type="common">Lizard's tail</name>
    <dbReference type="NCBI Taxonomy" id="13260"/>
    <lineage>
        <taxon>Eukaryota</taxon>
        <taxon>Viridiplantae</taxon>
        <taxon>Streptophyta</taxon>
        <taxon>Embryophyta</taxon>
        <taxon>Tracheophyta</taxon>
        <taxon>Spermatophyta</taxon>
        <taxon>Magnoliopsida</taxon>
        <taxon>Magnoliidae</taxon>
        <taxon>Piperales</taxon>
        <taxon>Saururaceae</taxon>
        <taxon>Saururus</taxon>
    </lineage>
</organism>
<comment type="function">
    <text evidence="1">May play a role in photosystem I and II biogenesis.</text>
</comment>
<comment type="subcellular location">
    <subcellularLocation>
        <location evidence="1">Plastid</location>
        <location evidence="1">Chloroplast thylakoid membrane</location>
        <topology evidence="1">Single-pass membrane protein</topology>
    </subcellularLocation>
</comment>
<comment type="similarity">
    <text evidence="1">Belongs to the PsbN family.</text>
</comment>
<comment type="caution">
    <text evidence="1">Originally thought to be a component of PSII; based on experiments in Synechocystis, N.tabacum and barley, and its absence from PSII in T.elongatus and T.vulcanus, this is probably not true.</text>
</comment>
<dbReference type="EMBL" id="AF123856">
    <property type="protein sequence ID" value="AAG26303.1"/>
    <property type="molecule type" value="Genomic_DNA"/>
</dbReference>
<dbReference type="RefSeq" id="YP_011086841.1">
    <property type="nucleotide sequence ID" value="NC_087887.1"/>
</dbReference>
<dbReference type="SMR" id="Q7J186"/>
<dbReference type="GeneID" id="89433389"/>
<dbReference type="GO" id="GO:0009535">
    <property type="term" value="C:chloroplast thylakoid membrane"/>
    <property type="evidence" value="ECO:0007669"/>
    <property type="project" value="UniProtKB-SubCell"/>
</dbReference>
<dbReference type="GO" id="GO:0015979">
    <property type="term" value="P:photosynthesis"/>
    <property type="evidence" value="ECO:0007669"/>
    <property type="project" value="InterPro"/>
</dbReference>
<dbReference type="HAMAP" id="MF_00293">
    <property type="entry name" value="PSII_PsbN"/>
    <property type="match status" value="1"/>
</dbReference>
<dbReference type="InterPro" id="IPR003398">
    <property type="entry name" value="PSII_PsbN"/>
</dbReference>
<dbReference type="PANTHER" id="PTHR35326">
    <property type="entry name" value="PROTEIN PSBN"/>
    <property type="match status" value="1"/>
</dbReference>
<dbReference type="PANTHER" id="PTHR35326:SF3">
    <property type="entry name" value="PROTEIN PSBN"/>
    <property type="match status" value="1"/>
</dbReference>
<dbReference type="Pfam" id="PF02468">
    <property type="entry name" value="PsbN"/>
    <property type="match status" value="1"/>
</dbReference>
<gene>
    <name evidence="1" type="primary">psbN</name>
</gene>
<protein>
    <recommendedName>
        <fullName evidence="1">Protein PsbN</fullName>
    </recommendedName>
</protein>
<accession>Q7J186</accession>
<name>PSBN_SAUCE</name>
<geneLocation type="chloroplast"/>
<proteinExistence type="inferred from homology"/>
<keyword id="KW-0150">Chloroplast</keyword>
<keyword id="KW-0472">Membrane</keyword>
<keyword id="KW-0934">Plastid</keyword>
<keyword id="KW-0793">Thylakoid</keyword>
<keyword id="KW-0812">Transmembrane</keyword>
<keyword id="KW-1133">Transmembrane helix</keyword>
<evidence type="ECO:0000255" key="1">
    <source>
        <dbReference type="HAMAP-Rule" id="MF_00293"/>
    </source>
</evidence>